<protein>
    <recommendedName>
        <fullName evidence="1">Thiamine-phosphate synthase</fullName>
        <shortName evidence="1">TP synthase</shortName>
        <shortName evidence="1">TPS</shortName>
        <ecNumber evidence="1">2.5.1.3</ecNumber>
    </recommendedName>
    <alternativeName>
        <fullName evidence="1">Thiamine-phosphate pyrophosphorylase</fullName>
        <shortName evidence="1">TMP pyrophosphorylase</shortName>
        <shortName evidence="1">TMP-PPase</shortName>
    </alternativeName>
</protein>
<comment type="function">
    <text evidence="1">Condenses 4-methyl-5-(beta-hydroxyethyl)thiazole monophosphate (THZ-P) and 2-methyl-4-amino-5-hydroxymethyl pyrimidine pyrophosphate (HMP-PP) to form thiamine monophosphate (TMP).</text>
</comment>
<comment type="catalytic activity">
    <reaction evidence="1">
        <text>2-[(2R,5Z)-2-carboxy-4-methylthiazol-5(2H)-ylidene]ethyl phosphate + 4-amino-2-methyl-5-(diphosphooxymethyl)pyrimidine + 2 H(+) = thiamine phosphate + CO2 + diphosphate</text>
        <dbReference type="Rhea" id="RHEA:47844"/>
        <dbReference type="ChEBI" id="CHEBI:15378"/>
        <dbReference type="ChEBI" id="CHEBI:16526"/>
        <dbReference type="ChEBI" id="CHEBI:33019"/>
        <dbReference type="ChEBI" id="CHEBI:37575"/>
        <dbReference type="ChEBI" id="CHEBI:57841"/>
        <dbReference type="ChEBI" id="CHEBI:62899"/>
        <dbReference type="EC" id="2.5.1.3"/>
    </reaction>
</comment>
<comment type="catalytic activity">
    <reaction evidence="1">
        <text>2-(2-carboxy-4-methylthiazol-5-yl)ethyl phosphate + 4-amino-2-methyl-5-(diphosphooxymethyl)pyrimidine + 2 H(+) = thiamine phosphate + CO2 + diphosphate</text>
        <dbReference type="Rhea" id="RHEA:47848"/>
        <dbReference type="ChEBI" id="CHEBI:15378"/>
        <dbReference type="ChEBI" id="CHEBI:16526"/>
        <dbReference type="ChEBI" id="CHEBI:33019"/>
        <dbReference type="ChEBI" id="CHEBI:37575"/>
        <dbReference type="ChEBI" id="CHEBI:57841"/>
        <dbReference type="ChEBI" id="CHEBI:62890"/>
        <dbReference type="EC" id="2.5.1.3"/>
    </reaction>
</comment>
<comment type="catalytic activity">
    <reaction evidence="1">
        <text>4-methyl-5-(2-phosphooxyethyl)-thiazole + 4-amino-2-methyl-5-(diphosphooxymethyl)pyrimidine + H(+) = thiamine phosphate + diphosphate</text>
        <dbReference type="Rhea" id="RHEA:22328"/>
        <dbReference type="ChEBI" id="CHEBI:15378"/>
        <dbReference type="ChEBI" id="CHEBI:33019"/>
        <dbReference type="ChEBI" id="CHEBI:37575"/>
        <dbReference type="ChEBI" id="CHEBI:57841"/>
        <dbReference type="ChEBI" id="CHEBI:58296"/>
        <dbReference type="EC" id="2.5.1.3"/>
    </reaction>
</comment>
<comment type="cofactor">
    <cofactor evidence="1">
        <name>Mg(2+)</name>
        <dbReference type="ChEBI" id="CHEBI:18420"/>
    </cofactor>
    <text evidence="1">Binds 1 Mg(2+) ion per subunit.</text>
</comment>
<comment type="pathway">
    <text evidence="1">Cofactor biosynthesis; thiamine diphosphate biosynthesis; thiamine phosphate from 4-amino-2-methyl-5-diphosphomethylpyrimidine and 4-methyl-5-(2-phosphoethyl)-thiazole: step 1/1.</text>
</comment>
<comment type="similarity">
    <text evidence="1">Belongs to the thiamine-phosphate synthase family.</text>
</comment>
<reference key="1">
    <citation type="submission" date="2003-03" db="EMBL/GenBank/DDBJ databases">
        <title>The complete genome sequence of Neisseria gonorrhoeae.</title>
        <authorList>
            <person name="Lewis L.A."/>
            <person name="Gillaspy A.F."/>
            <person name="McLaughlin R.E."/>
            <person name="Gipson M."/>
            <person name="Ducey T.F."/>
            <person name="Ownbey T."/>
            <person name="Hartman K."/>
            <person name="Nydick C."/>
            <person name="Carson M.B."/>
            <person name="Vaughn J."/>
            <person name="Thomson C."/>
            <person name="Song L."/>
            <person name="Lin S."/>
            <person name="Yuan X."/>
            <person name="Najar F."/>
            <person name="Zhan M."/>
            <person name="Ren Q."/>
            <person name="Zhu H."/>
            <person name="Qi S."/>
            <person name="Kenton S.M."/>
            <person name="Lai H."/>
            <person name="White J.D."/>
            <person name="Clifton S."/>
            <person name="Roe B.A."/>
            <person name="Dyer D.W."/>
        </authorList>
    </citation>
    <scope>NUCLEOTIDE SEQUENCE [LARGE SCALE GENOMIC DNA]</scope>
    <source>
        <strain>ATCC 700825 / FA 1090</strain>
    </source>
</reference>
<feature type="chain" id="PRO_0000157028" description="Thiamine-phosphate synthase">
    <location>
        <begin position="1"/>
        <end position="205"/>
    </location>
</feature>
<feature type="binding site" evidence="1">
    <location>
        <begin position="34"/>
        <end position="38"/>
    </location>
    <ligand>
        <name>4-amino-2-methyl-5-(diphosphooxymethyl)pyrimidine</name>
        <dbReference type="ChEBI" id="CHEBI:57841"/>
    </ligand>
</feature>
<feature type="binding site" evidence="1">
    <location>
        <position position="66"/>
    </location>
    <ligand>
        <name>4-amino-2-methyl-5-(diphosphooxymethyl)pyrimidine</name>
        <dbReference type="ChEBI" id="CHEBI:57841"/>
    </ligand>
</feature>
<feature type="binding site" evidence="1">
    <location>
        <position position="67"/>
    </location>
    <ligand>
        <name>Mg(2+)</name>
        <dbReference type="ChEBI" id="CHEBI:18420"/>
    </ligand>
</feature>
<feature type="binding site" evidence="1">
    <location>
        <position position="86"/>
    </location>
    <ligand>
        <name>Mg(2+)</name>
        <dbReference type="ChEBI" id="CHEBI:18420"/>
    </ligand>
</feature>
<feature type="binding site" evidence="1">
    <location>
        <position position="105"/>
    </location>
    <ligand>
        <name>4-amino-2-methyl-5-(diphosphooxymethyl)pyrimidine</name>
        <dbReference type="ChEBI" id="CHEBI:57841"/>
    </ligand>
</feature>
<feature type="binding site" evidence="1">
    <location>
        <begin position="131"/>
        <end position="133"/>
    </location>
    <ligand>
        <name>2-[(2R,5Z)-2-carboxy-4-methylthiazol-5(2H)-ylidene]ethyl phosphate</name>
        <dbReference type="ChEBI" id="CHEBI:62899"/>
    </ligand>
</feature>
<feature type="binding site" evidence="1">
    <location>
        <position position="134"/>
    </location>
    <ligand>
        <name>4-amino-2-methyl-5-(diphosphooxymethyl)pyrimidine</name>
        <dbReference type="ChEBI" id="CHEBI:57841"/>
    </ligand>
</feature>
<feature type="binding site" evidence="1">
    <location>
        <position position="163"/>
    </location>
    <ligand>
        <name>2-[(2R,5Z)-2-carboxy-4-methylthiazol-5(2H)-ylidene]ethyl phosphate</name>
        <dbReference type="ChEBI" id="CHEBI:62899"/>
    </ligand>
</feature>
<gene>
    <name evidence="1" type="primary">thiE</name>
    <name type="ordered locus">NGO_2007</name>
</gene>
<name>THIE_NEIG1</name>
<evidence type="ECO:0000255" key="1">
    <source>
        <dbReference type="HAMAP-Rule" id="MF_00097"/>
    </source>
</evidence>
<accession>Q5F5C2</accession>
<sequence length="205" mass="21839">MTFPPLKSLLKFYAVVPTADWVGRMVKAGADTVQLRCKTLHGNELKREIARCVAACQGSRTQLFINDHWREAIEAGAYGVHLGQEDMDTADLAAIAAAGLRLGLSTHSVAELDRALFVHPGYIASGAIFQTTTKQMPTAPQGLDKLREYVEQARGTPVVAIGGIDLNNARAVLATGVSSLAAVRAVTEAANPEAVVKAFQALWDG</sequence>
<dbReference type="EC" id="2.5.1.3" evidence="1"/>
<dbReference type="EMBL" id="AE004969">
    <property type="protein sequence ID" value="AAW90615.1"/>
    <property type="molecule type" value="Genomic_DNA"/>
</dbReference>
<dbReference type="RefSeq" id="WP_010355818.1">
    <property type="nucleotide sequence ID" value="NC_002946.2"/>
</dbReference>
<dbReference type="RefSeq" id="YP_209027.1">
    <property type="nucleotide sequence ID" value="NC_002946.2"/>
</dbReference>
<dbReference type="SMR" id="Q5F5C2"/>
<dbReference type="STRING" id="242231.NGO_2007"/>
<dbReference type="KEGG" id="ngo:NGO_2007"/>
<dbReference type="PATRIC" id="fig|242231.10.peg.2421"/>
<dbReference type="HOGENOM" id="CLU_018272_3_3_4"/>
<dbReference type="UniPathway" id="UPA00060">
    <property type="reaction ID" value="UER00141"/>
</dbReference>
<dbReference type="Proteomes" id="UP000000535">
    <property type="component" value="Chromosome"/>
</dbReference>
<dbReference type="GO" id="GO:0005737">
    <property type="term" value="C:cytoplasm"/>
    <property type="evidence" value="ECO:0007669"/>
    <property type="project" value="TreeGrafter"/>
</dbReference>
<dbReference type="GO" id="GO:0000287">
    <property type="term" value="F:magnesium ion binding"/>
    <property type="evidence" value="ECO:0007669"/>
    <property type="project" value="UniProtKB-UniRule"/>
</dbReference>
<dbReference type="GO" id="GO:0004789">
    <property type="term" value="F:thiamine-phosphate diphosphorylase activity"/>
    <property type="evidence" value="ECO:0007669"/>
    <property type="project" value="UniProtKB-UniRule"/>
</dbReference>
<dbReference type="GO" id="GO:0009228">
    <property type="term" value="P:thiamine biosynthetic process"/>
    <property type="evidence" value="ECO:0007669"/>
    <property type="project" value="UniProtKB-KW"/>
</dbReference>
<dbReference type="GO" id="GO:0009229">
    <property type="term" value="P:thiamine diphosphate biosynthetic process"/>
    <property type="evidence" value="ECO:0007669"/>
    <property type="project" value="UniProtKB-UniRule"/>
</dbReference>
<dbReference type="CDD" id="cd00564">
    <property type="entry name" value="TMP_TenI"/>
    <property type="match status" value="1"/>
</dbReference>
<dbReference type="FunFam" id="3.20.20.70:FF:000064">
    <property type="entry name" value="Thiamine-phosphate synthase"/>
    <property type="match status" value="1"/>
</dbReference>
<dbReference type="Gene3D" id="3.20.20.70">
    <property type="entry name" value="Aldolase class I"/>
    <property type="match status" value="1"/>
</dbReference>
<dbReference type="HAMAP" id="MF_00097">
    <property type="entry name" value="TMP_synthase"/>
    <property type="match status" value="1"/>
</dbReference>
<dbReference type="InterPro" id="IPR013785">
    <property type="entry name" value="Aldolase_TIM"/>
</dbReference>
<dbReference type="InterPro" id="IPR036206">
    <property type="entry name" value="ThiamineP_synth_sf"/>
</dbReference>
<dbReference type="InterPro" id="IPR022998">
    <property type="entry name" value="ThiamineP_synth_TenI"/>
</dbReference>
<dbReference type="InterPro" id="IPR034291">
    <property type="entry name" value="TMP_synthase"/>
</dbReference>
<dbReference type="NCBIfam" id="TIGR00693">
    <property type="entry name" value="thiE"/>
    <property type="match status" value="1"/>
</dbReference>
<dbReference type="PANTHER" id="PTHR20857">
    <property type="entry name" value="THIAMINE-PHOSPHATE PYROPHOSPHORYLASE"/>
    <property type="match status" value="1"/>
</dbReference>
<dbReference type="PANTHER" id="PTHR20857:SF15">
    <property type="entry name" value="THIAMINE-PHOSPHATE SYNTHASE"/>
    <property type="match status" value="1"/>
</dbReference>
<dbReference type="Pfam" id="PF02581">
    <property type="entry name" value="TMP-TENI"/>
    <property type="match status" value="1"/>
</dbReference>
<dbReference type="SUPFAM" id="SSF51391">
    <property type="entry name" value="Thiamin phosphate synthase"/>
    <property type="match status" value="1"/>
</dbReference>
<proteinExistence type="inferred from homology"/>
<keyword id="KW-0460">Magnesium</keyword>
<keyword id="KW-0479">Metal-binding</keyword>
<keyword id="KW-1185">Reference proteome</keyword>
<keyword id="KW-0784">Thiamine biosynthesis</keyword>
<keyword id="KW-0808">Transferase</keyword>
<organism>
    <name type="scientific">Neisseria gonorrhoeae (strain ATCC 700825 / FA 1090)</name>
    <dbReference type="NCBI Taxonomy" id="242231"/>
    <lineage>
        <taxon>Bacteria</taxon>
        <taxon>Pseudomonadati</taxon>
        <taxon>Pseudomonadota</taxon>
        <taxon>Betaproteobacteria</taxon>
        <taxon>Neisseriales</taxon>
        <taxon>Neisseriaceae</taxon>
        <taxon>Neisseria</taxon>
    </lineage>
</organism>